<gene>
    <name evidence="1" type="primary">cysD</name>
    <name type="ordered locus">Sputcn32_3043</name>
</gene>
<keyword id="KW-0067">ATP-binding</keyword>
<keyword id="KW-0547">Nucleotide-binding</keyword>
<keyword id="KW-0548">Nucleotidyltransferase</keyword>
<keyword id="KW-0808">Transferase</keyword>
<accession>A4Y9X3</accession>
<evidence type="ECO:0000255" key="1">
    <source>
        <dbReference type="HAMAP-Rule" id="MF_00064"/>
    </source>
</evidence>
<evidence type="ECO:0000256" key="2">
    <source>
        <dbReference type="SAM" id="MobiDB-lite"/>
    </source>
</evidence>
<proteinExistence type="inferred from homology"/>
<reference key="1">
    <citation type="submission" date="2007-04" db="EMBL/GenBank/DDBJ databases">
        <title>Complete sequence of Shewanella putrefaciens CN-32.</title>
        <authorList>
            <consortium name="US DOE Joint Genome Institute"/>
            <person name="Copeland A."/>
            <person name="Lucas S."/>
            <person name="Lapidus A."/>
            <person name="Barry K."/>
            <person name="Detter J.C."/>
            <person name="Glavina del Rio T."/>
            <person name="Hammon N."/>
            <person name="Israni S."/>
            <person name="Dalin E."/>
            <person name="Tice H."/>
            <person name="Pitluck S."/>
            <person name="Chain P."/>
            <person name="Malfatti S."/>
            <person name="Shin M."/>
            <person name="Vergez L."/>
            <person name="Schmutz J."/>
            <person name="Larimer F."/>
            <person name="Land M."/>
            <person name="Hauser L."/>
            <person name="Kyrpides N."/>
            <person name="Mikhailova N."/>
            <person name="Romine M.F."/>
            <person name="Fredrickson J."/>
            <person name="Tiedje J."/>
            <person name="Richardson P."/>
        </authorList>
    </citation>
    <scope>NUCLEOTIDE SEQUENCE [LARGE SCALE GENOMIC DNA]</scope>
    <source>
        <strain>CN-32 / ATCC BAA-453</strain>
    </source>
</reference>
<sequence>MAGRELSHLQQLEAESIQIIREVAAEFDNPVMLYSIGKDSSVMLHLARKAFYPGKIPFPLLHVDTGWKFKEMIAFRDTQAKKFGFELLTHINPEGLAQGINPFDHGSAKHTDIMKTQGLKQALNQYGFDAAFGGARRDEEKSRAKERVYSFRDRHHRWDPKNQRPELWRTYNGAVNKGESIRVFPLSNWTELDIWQYIYQENIELVPLYFAAKRKVVERGGQLIMADDERMQLAEGEQIKEEVVRFRTLGCYPLTAAMHSEADSLEKIIEEMLLTRSSERQGRLIDSDQSASMEQKKRQGYF</sequence>
<name>CYSD_SHEPC</name>
<comment type="function">
    <text evidence="1">With CysN forms the ATP sulfurylase (ATPS) that catalyzes the adenylation of sulfate producing adenosine 5'-phosphosulfate (APS) and diphosphate, the first enzymatic step in sulfur assimilation pathway. APS synthesis involves the formation of a high-energy phosphoric-sulfuric acid anhydride bond driven by GTP hydrolysis by CysN coupled to ATP hydrolysis by CysD.</text>
</comment>
<comment type="catalytic activity">
    <reaction evidence="1">
        <text>sulfate + ATP + H(+) = adenosine 5'-phosphosulfate + diphosphate</text>
        <dbReference type="Rhea" id="RHEA:18133"/>
        <dbReference type="ChEBI" id="CHEBI:15378"/>
        <dbReference type="ChEBI" id="CHEBI:16189"/>
        <dbReference type="ChEBI" id="CHEBI:30616"/>
        <dbReference type="ChEBI" id="CHEBI:33019"/>
        <dbReference type="ChEBI" id="CHEBI:58243"/>
        <dbReference type="EC" id="2.7.7.4"/>
    </reaction>
</comment>
<comment type="pathway">
    <text evidence="1">Sulfur metabolism; hydrogen sulfide biosynthesis; sulfite from sulfate: step 1/3.</text>
</comment>
<comment type="subunit">
    <text evidence="1">Heterodimer composed of CysD, the smaller subunit, and CysN.</text>
</comment>
<comment type="similarity">
    <text evidence="1">Belongs to the PAPS reductase family. CysD subfamily.</text>
</comment>
<dbReference type="EC" id="2.7.7.4" evidence="1"/>
<dbReference type="EMBL" id="CP000681">
    <property type="protein sequence ID" value="ABP76756.1"/>
    <property type="molecule type" value="Genomic_DNA"/>
</dbReference>
<dbReference type="SMR" id="A4Y9X3"/>
<dbReference type="STRING" id="319224.Sputcn32_3043"/>
<dbReference type="KEGG" id="spc:Sputcn32_3043"/>
<dbReference type="eggNOG" id="COG0175">
    <property type="taxonomic scope" value="Bacteria"/>
</dbReference>
<dbReference type="HOGENOM" id="CLU_043026_0_0_6"/>
<dbReference type="UniPathway" id="UPA00140">
    <property type="reaction ID" value="UER00204"/>
</dbReference>
<dbReference type="GO" id="GO:0005524">
    <property type="term" value="F:ATP binding"/>
    <property type="evidence" value="ECO:0007669"/>
    <property type="project" value="UniProtKB-KW"/>
</dbReference>
<dbReference type="GO" id="GO:0004781">
    <property type="term" value="F:sulfate adenylyltransferase (ATP) activity"/>
    <property type="evidence" value="ECO:0007669"/>
    <property type="project" value="UniProtKB-UniRule"/>
</dbReference>
<dbReference type="GO" id="GO:0070814">
    <property type="term" value="P:hydrogen sulfide biosynthetic process"/>
    <property type="evidence" value="ECO:0007669"/>
    <property type="project" value="UniProtKB-UniRule"/>
</dbReference>
<dbReference type="GO" id="GO:0000103">
    <property type="term" value="P:sulfate assimilation"/>
    <property type="evidence" value="ECO:0007669"/>
    <property type="project" value="UniProtKB-UniRule"/>
</dbReference>
<dbReference type="CDD" id="cd23946">
    <property type="entry name" value="Sulfate_adenylyltransferase_2"/>
    <property type="match status" value="1"/>
</dbReference>
<dbReference type="FunFam" id="3.40.50.620:FF:000002">
    <property type="entry name" value="Sulfate adenylyltransferase subunit 2"/>
    <property type="match status" value="1"/>
</dbReference>
<dbReference type="Gene3D" id="3.40.50.620">
    <property type="entry name" value="HUPs"/>
    <property type="match status" value="1"/>
</dbReference>
<dbReference type="HAMAP" id="MF_00064">
    <property type="entry name" value="Sulf_adenylyltr_sub2"/>
    <property type="match status" value="1"/>
</dbReference>
<dbReference type="InterPro" id="IPR002500">
    <property type="entry name" value="PAPS_reduct_dom"/>
</dbReference>
<dbReference type="InterPro" id="IPR014729">
    <property type="entry name" value="Rossmann-like_a/b/a_fold"/>
</dbReference>
<dbReference type="InterPro" id="IPR011784">
    <property type="entry name" value="SO4_adenylTrfase_ssu"/>
</dbReference>
<dbReference type="InterPro" id="IPR050128">
    <property type="entry name" value="Sulfate_adenylyltrnsfr_sub2"/>
</dbReference>
<dbReference type="NCBIfam" id="TIGR02039">
    <property type="entry name" value="CysD"/>
    <property type="match status" value="1"/>
</dbReference>
<dbReference type="NCBIfam" id="NF003587">
    <property type="entry name" value="PRK05253.1"/>
    <property type="match status" value="1"/>
</dbReference>
<dbReference type="NCBIfam" id="NF009214">
    <property type="entry name" value="PRK12563.1"/>
    <property type="match status" value="1"/>
</dbReference>
<dbReference type="PANTHER" id="PTHR43196">
    <property type="entry name" value="SULFATE ADENYLYLTRANSFERASE SUBUNIT 2"/>
    <property type="match status" value="1"/>
</dbReference>
<dbReference type="PANTHER" id="PTHR43196:SF1">
    <property type="entry name" value="SULFATE ADENYLYLTRANSFERASE SUBUNIT 2"/>
    <property type="match status" value="1"/>
</dbReference>
<dbReference type="Pfam" id="PF01507">
    <property type="entry name" value="PAPS_reduct"/>
    <property type="match status" value="1"/>
</dbReference>
<dbReference type="PIRSF" id="PIRSF002936">
    <property type="entry name" value="CysDAde_trans"/>
    <property type="match status" value="1"/>
</dbReference>
<dbReference type="SUPFAM" id="SSF52402">
    <property type="entry name" value="Adenine nucleotide alpha hydrolases-like"/>
    <property type="match status" value="1"/>
</dbReference>
<protein>
    <recommendedName>
        <fullName evidence="1">Sulfate adenylyltransferase subunit 2</fullName>
        <ecNumber evidence="1">2.7.7.4</ecNumber>
    </recommendedName>
    <alternativeName>
        <fullName evidence="1">ATP-sulfurylase small subunit</fullName>
    </alternativeName>
    <alternativeName>
        <fullName evidence="1">Sulfate adenylate transferase</fullName>
        <shortName evidence="1">SAT</shortName>
    </alternativeName>
</protein>
<organism>
    <name type="scientific">Shewanella putrefaciens (strain CN-32 / ATCC BAA-453)</name>
    <dbReference type="NCBI Taxonomy" id="319224"/>
    <lineage>
        <taxon>Bacteria</taxon>
        <taxon>Pseudomonadati</taxon>
        <taxon>Pseudomonadota</taxon>
        <taxon>Gammaproteobacteria</taxon>
        <taxon>Alteromonadales</taxon>
        <taxon>Shewanellaceae</taxon>
        <taxon>Shewanella</taxon>
    </lineage>
</organism>
<feature type="chain" id="PRO_1000008988" description="Sulfate adenylyltransferase subunit 2">
    <location>
        <begin position="1"/>
        <end position="302"/>
    </location>
</feature>
<feature type="region of interest" description="Disordered" evidence="2">
    <location>
        <begin position="280"/>
        <end position="302"/>
    </location>
</feature>